<comment type="function">
    <text evidence="1">Contributes to K(+)/H(+) antiport activity by supporting proton efflux to control proton extrusion and homeostasis in chloroplasts in a light-dependent manner to modulate photosynthesis. Prevents excessive induction of non-photochemical quenching (NPQ) under continuous-light conditions. Indirectly promotes efficient inorganic carbon uptake into chloroplasts.</text>
</comment>
<comment type="catalytic activity">
    <reaction evidence="1">
        <text>K(+)(in) + H(+)(out) = K(+)(out) + H(+)(in)</text>
        <dbReference type="Rhea" id="RHEA:29467"/>
        <dbReference type="ChEBI" id="CHEBI:15378"/>
        <dbReference type="ChEBI" id="CHEBI:29103"/>
    </reaction>
</comment>
<comment type="subcellular location">
    <subcellularLocation>
        <location evidence="1">Plastid</location>
        <location evidence="1">Chloroplast inner membrane</location>
        <topology evidence="1">Multi-pass membrane protein</topology>
    </subcellularLocation>
</comment>
<comment type="similarity">
    <text evidence="1 2">Belongs to the CemA family.</text>
</comment>
<name>CEMA_ZYGCR</name>
<feature type="chain" id="PRO_0000275253" description="Potassium/proton antiporter CemA">
    <location>
        <begin position="1"/>
        <end position="453"/>
    </location>
</feature>
<feature type="transmembrane region" description="Helical" evidence="1">
    <location>
        <begin position="235"/>
        <end position="255"/>
    </location>
</feature>
<feature type="transmembrane region" description="Helical" evidence="1">
    <location>
        <begin position="328"/>
        <end position="348"/>
    </location>
</feature>
<feature type="transmembrane region" description="Helical" evidence="1">
    <location>
        <begin position="378"/>
        <end position="398"/>
    </location>
</feature>
<feature type="transmembrane region" description="Helical" evidence="1">
    <location>
        <begin position="414"/>
        <end position="434"/>
    </location>
</feature>
<proteinExistence type="inferred from homology"/>
<evidence type="ECO:0000255" key="1">
    <source>
        <dbReference type="HAMAP-Rule" id="MF_01308"/>
    </source>
</evidence>
<evidence type="ECO:0000305" key="2"/>
<keyword id="KW-0050">Antiport</keyword>
<keyword id="KW-0150">Chloroplast</keyword>
<keyword id="KW-0375">Hydrogen ion transport</keyword>
<keyword id="KW-0406">Ion transport</keyword>
<keyword id="KW-0472">Membrane</keyword>
<keyword id="KW-0934">Plastid</keyword>
<keyword id="KW-1001">Plastid inner membrane</keyword>
<keyword id="KW-0630">Potassium</keyword>
<keyword id="KW-0633">Potassium transport</keyword>
<keyword id="KW-0812">Transmembrane</keyword>
<keyword id="KW-1133">Transmembrane helix</keyword>
<keyword id="KW-0813">Transport</keyword>
<gene>
    <name evidence="1" type="primary">cemA</name>
</gene>
<reference key="1">
    <citation type="journal article" date="2005" name="BMC Biol.">
        <title>The complete chloroplast DNA sequences of the charophycean green algae Staurastrum and Zygnema reveal that the chloroplast genome underwent extensive changes during the evolution of the Zygnematales.</title>
        <authorList>
            <person name="Turmel M."/>
            <person name="Otis C."/>
            <person name="Lemieux C."/>
        </authorList>
    </citation>
    <scope>NUCLEOTIDE SEQUENCE [LARGE SCALE GENOMIC DNA]</scope>
</reference>
<geneLocation type="chloroplast"/>
<sequence>MCCYLNLLMIQFESSHICHWFWNTPYRALQRAYKASKKVRNIHTNYIFCKSKPAFQRFGYNLDLYIDSILDESSFQIYWGLLEFKASRFVLTKFSNLIFKHNFHLLTQTDGNKLFSNSFDREQSLLFCDIHSTSLKIINRKLAWIEAALADLEMLRDNSSSTSITPILNKVYNVSLPMSLDSTSKRVAYESVGLVPRSITRTFARFQTELAGRSVSVVLPEFRLAKYQATASVQYMACLIFLPWVFSTICKIIFLQPLVSHYWDTMQTQVFFNASQEQRALRRLQQIEELLWLDIVIASVPNKHLQDIAGEIHNKTLELVDIYNRESICTILNLLTDWISITCLACLLTWGKKRLAIFNSWIQELFYSLSDTMKAFFILLLTDLCIGFHSPHGWEIIITLFLEHIGFAHNKYVVSCFVSTFPVILDTVLKYWIFRHLNRISPSIVVTYHTMNE</sequence>
<organism>
    <name type="scientific">Zygnema circumcarinatum</name>
    <name type="common">Green alga</name>
    <dbReference type="NCBI Taxonomy" id="35869"/>
    <lineage>
        <taxon>Eukaryota</taxon>
        <taxon>Viridiplantae</taxon>
        <taxon>Streptophyta</taxon>
        <taxon>Zygnematophyceae</taxon>
        <taxon>Zygnematophycidae</taxon>
        <taxon>Zygnematales</taxon>
        <taxon>Zygnemataceae</taxon>
        <taxon>Zygnema</taxon>
    </lineage>
</organism>
<protein>
    <recommendedName>
        <fullName evidence="1">Potassium/proton antiporter CemA</fullName>
    </recommendedName>
    <alternativeName>
        <fullName evidence="1">Chloroplast envelope membrane protein A</fullName>
        <shortName evidence="1">CemA</shortName>
    </alternativeName>
</protein>
<dbReference type="EMBL" id="AY958086">
    <property type="protein sequence ID" value="AAX45802.1"/>
    <property type="molecule type" value="Genomic_DNA"/>
</dbReference>
<dbReference type="RefSeq" id="YP_636559.1">
    <property type="nucleotide sequence ID" value="NC_008117.1"/>
</dbReference>
<dbReference type="GeneID" id="4108262"/>
<dbReference type="GO" id="GO:0009706">
    <property type="term" value="C:chloroplast inner membrane"/>
    <property type="evidence" value="ECO:0007669"/>
    <property type="project" value="UniProtKB-SubCell"/>
</dbReference>
<dbReference type="GO" id="GO:0015297">
    <property type="term" value="F:antiporter activity"/>
    <property type="evidence" value="ECO:0007669"/>
    <property type="project" value="UniProtKB-KW"/>
</dbReference>
<dbReference type="GO" id="GO:0015078">
    <property type="term" value="F:proton transmembrane transporter activity"/>
    <property type="evidence" value="ECO:0007669"/>
    <property type="project" value="UniProtKB-UniRule"/>
</dbReference>
<dbReference type="GO" id="GO:0006813">
    <property type="term" value="P:potassium ion transport"/>
    <property type="evidence" value="ECO:0007669"/>
    <property type="project" value="UniProtKB-UniRule"/>
</dbReference>
<dbReference type="HAMAP" id="MF_01308">
    <property type="entry name" value="CemA_PxcA"/>
    <property type="match status" value="1"/>
</dbReference>
<dbReference type="InterPro" id="IPR004282">
    <property type="entry name" value="CemA"/>
</dbReference>
<dbReference type="PANTHER" id="PTHR33650:SF2">
    <property type="entry name" value="CHLOROPLAST ENVELOPE MEMBRANE PROTEIN"/>
    <property type="match status" value="1"/>
</dbReference>
<dbReference type="PANTHER" id="PTHR33650">
    <property type="entry name" value="CHLOROPLAST ENVELOPE MEMBRANE PROTEIN-RELATED"/>
    <property type="match status" value="1"/>
</dbReference>
<dbReference type="Pfam" id="PF03040">
    <property type="entry name" value="CemA"/>
    <property type="match status" value="1"/>
</dbReference>
<accession>Q32RG7</accession>